<keyword id="KW-0284">Flavonoid biosynthesis</keyword>
<keyword id="KW-0413">Isomerase</keyword>
<sequence length="226" mass="24172">MEAVTKLDVEGTAFDSVIIPPGSSKTHFLGGAGVRGLEIGGKFIAFTAIGIYLETDSIPFLADKWKGKTGEELAGSLDFFRDICTGPFEKFTNVTMILPLTGEQYSEKVTENCVAYWKAIGIYTDAEASAVDKFKQAFKPESFPPGSSILFTHTPSGTLKIAFSKDGSVSKDEGVLIENKALTQAVLESIIGEHGVSPAAKLSIASRLSEIMNKVGNVEEKLPVLS</sequence>
<name>CFI_ALLCE</name>
<protein>
    <recommendedName>
        <fullName>Chalcone--flavanone isomerase</fullName>
        <shortName>Chalcone isomerase</shortName>
        <ecNumber>5.5.1.6</ecNumber>
    </recommendedName>
</protein>
<proteinExistence type="evidence at transcript level"/>
<accession>Q6QHK0</accession>
<accession>Q66VY8</accession>
<accession>Q66VY9</accession>
<gene>
    <name type="primary">CHI</name>
</gene>
<feature type="chain" id="PRO_0000300830" description="Chalcone--flavanone isomerase">
    <location>
        <begin position="1"/>
        <end position="226"/>
    </location>
</feature>
<feature type="binding site" evidence="1">
    <location>
        <position position="47"/>
    </location>
    <ligand>
        <name>substrate</name>
    </ligand>
</feature>
<feature type="binding site" evidence="1">
    <location>
        <position position="112"/>
    </location>
    <ligand>
        <name>substrate</name>
    </ligand>
</feature>
<feature type="binding site" evidence="1">
    <location>
        <position position="189"/>
    </location>
    <ligand>
        <name>substrate</name>
    </ligand>
</feature>
<feature type="site" description="Important for catalytic activity" evidence="1">
    <location>
        <position position="105"/>
    </location>
</feature>
<feature type="sequence variant" description="In strain: cv. Serrana and cv. Texas Early White.">
    <original>S</original>
    <variation>L</variation>
    <location>
        <position position="168"/>
    </location>
</feature>
<feature type="sequence variant" description="In strain: cv. Serrana and cv. Texas Early White.">
    <original>S</original>
    <variation>P</variation>
    <location>
        <position position="170"/>
    </location>
</feature>
<feature type="sequence variant" description="In strain: cv. Texas Early White.">
    <original>H</original>
    <variation>Y</variation>
    <location>
        <position position="194"/>
    </location>
</feature>
<evidence type="ECO:0000250" key="1"/>
<evidence type="ECO:0000269" key="2">
    <source ref="1"/>
</evidence>
<evidence type="ECO:0000305" key="3"/>
<reference key="1">
    <citation type="submission" date="2004-02" db="EMBL/GenBank/DDBJ databases">
        <title>Isolation of anthocyanin biosynthesis genes from onion (Allium cepa).</title>
        <authorList>
            <person name="Kim S."/>
            <person name="Binzel M.L."/>
            <person name="Yoo K."/>
            <person name="Pike L.M."/>
        </authorList>
    </citation>
    <scope>NUCLEOTIDE SEQUENCE [GENOMIC DNA / MRNA] (ALLELES B; H AND T)</scope>
    <source>
        <strain>cv. H6</strain>
        <strain>cv. Serrana</strain>
        <strain>cv. Texas Early White</strain>
    </source>
</reference>
<comment type="function">
    <text evidence="1">Catalyzes the intramolecular cyclization of bicyclic chalcones into tricyclic (S)-flavanones. Responsible for the isomerization of 4,2',4',6'-tetrahydroxychalcone (also termed chalcone) into naringenin (By similarity).</text>
</comment>
<comment type="catalytic activity">
    <reaction>
        <text>a chalcone = a flavanone.</text>
        <dbReference type="EC" id="5.5.1.6"/>
    </reaction>
</comment>
<comment type="pathway">
    <text>Secondary metabolite biosynthesis; flavonoid biosynthesis.</text>
</comment>
<comment type="polymorphism">
    <text evidence="2">There are at least three alleles: H (sequence displayed) found in cv. H6, B found in cv. Serrana, and T found in cv. Texas Early White.</text>
</comment>
<comment type="miscellaneous">
    <text>Part of the biosynthetic pathway for all classes of flavonoids, a large class of secondary plant metabolites, many of which are brightly colored.</text>
</comment>
<comment type="similarity">
    <text evidence="3">Belongs to the chalcone isomerase family.</text>
</comment>
<organism>
    <name type="scientific">Allium cepa</name>
    <name type="common">Onion</name>
    <dbReference type="NCBI Taxonomy" id="4679"/>
    <lineage>
        <taxon>Eukaryota</taxon>
        <taxon>Viridiplantae</taxon>
        <taxon>Streptophyta</taxon>
        <taxon>Embryophyta</taxon>
        <taxon>Tracheophyta</taxon>
        <taxon>Spermatophyta</taxon>
        <taxon>Magnoliopsida</taxon>
        <taxon>Liliopsida</taxon>
        <taxon>Asparagales</taxon>
        <taxon>Amaryllidaceae</taxon>
        <taxon>Allioideae</taxon>
        <taxon>Allieae</taxon>
        <taxon>Allium</taxon>
    </lineage>
</organism>
<dbReference type="EC" id="5.5.1.6"/>
<dbReference type="EMBL" id="AY541034">
    <property type="protein sequence ID" value="AAS48418.1"/>
    <property type="molecule type" value="mRNA"/>
</dbReference>
<dbReference type="EMBL" id="AY700850">
    <property type="protein sequence ID" value="AAU11843.1"/>
    <property type="molecule type" value="Genomic_DNA"/>
</dbReference>
<dbReference type="EMBL" id="AY700851">
    <property type="protein sequence ID" value="AAU11844.1"/>
    <property type="molecule type" value="Genomic_DNA"/>
</dbReference>
<dbReference type="EMBL" id="AY700852">
    <property type="protein sequence ID" value="AAU11845.1"/>
    <property type="molecule type" value="Genomic_DNA"/>
</dbReference>
<dbReference type="SMR" id="Q6QHK0"/>
<dbReference type="UniPathway" id="UPA00154"/>
<dbReference type="GO" id="GO:0045430">
    <property type="term" value="F:chalcone isomerase activity"/>
    <property type="evidence" value="ECO:0007669"/>
    <property type="project" value="UniProtKB-EC"/>
</dbReference>
<dbReference type="GO" id="GO:0009813">
    <property type="term" value="P:flavonoid biosynthetic process"/>
    <property type="evidence" value="ECO:0007669"/>
    <property type="project" value="UniProtKB-UniPathway"/>
</dbReference>
<dbReference type="Gene3D" id="1.10.890.20">
    <property type="match status" value="1"/>
</dbReference>
<dbReference type="Gene3D" id="3.50.70.10">
    <property type="match status" value="1"/>
</dbReference>
<dbReference type="InterPro" id="IPR044164">
    <property type="entry name" value="CFI"/>
</dbReference>
<dbReference type="InterPro" id="IPR016087">
    <property type="entry name" value="Chalcone_isomerase"/>
</dbReference>
<dbReference type="InterPro" id="IPR016088">
    <property type="entry name" value="Chalcone_isomerase_3-sand"/>
</dbReference>
<dbReference type="InterPro" id="IPR016089">
    <property type="entry name" value="Chalcone_isomerase_bundle_sf"/>
</dbReference>
<dbReference type="InterPro" id="IPR036298">
    <property type="entry name" value="Chalcone_isomerase_sf"/>
</dbReference>
<dbReference type="PANTHER" id="PTHR28039:SF8">
    <property type="entry name" value="CHALCONE--FLAVANONE ISOMERASE 1-RELATED"/>
    <property type="match status" value="1"/>
</dbReference>
<dbReference type="PANTHER" id="PTHR28039">
    <property type="entry name" value="CHALCONE--FLAVONONE ISOMERASE 1-RELATED"/>
    <property type="match status" value="1"/>
</dbReference>
<dbReference type="Pfam" id="PF02431">
    <property type="entry name" value="Chalcone"/>
    <property type="match status" value="1"/>
</dbReference>
<dbReference type="SUPFAM" id="SSF54626">
    <property type="entry name" value="Chalcone isomerase"/>
    <property type="match status" value="1"/>
</dbReference>